<keyword id="KW-0963">Cytoplasm</keyword>
<keyword id="KW-0251">Elongation factor</keyword>
<keyword id="KW-0648">Protein biosynthesis</keyword>
<gene>
    <name evidence="1" type="primary">efp</name>
    <name type="ordered locus">BcerKBAB4_4050</name>
</gene>
<reference key="1">
    <citation type="journal article" date="2008" name="Chem. Biol. Interact.">
        <title>Extending the Bacillus cereus group genomics to putative food-borne pathogens of different toxicity.</title>
        <authorList>
            <person name="Lapidus A."/>
            <person name="Goltsman E."/>
            <person name="Auger S."/>
            <person name="Galleron N."/>
            <person name="Segurens B."/>
            <person name="Dossat C."/>
            <person name="Land M.L."/>
            <person name="Broussolle V."/>
            <person name="Brillard J."/>
            <person name="Guinebretiere M.-H."/>
            <person name="Sanchis V."/>
            <person name="Nguen-the C."/>
            <person name="Lereclus D."/>
            <person name="Richardson P."/>
            <person name="Wincker P."/>
            <person name="Weissenbach J."/>
            <person name="Ehrlich S.D."/>
            <person name="Sorokin A."/>
        </authorList>
    </citation>
    <scope>NUCLEOTIDE SEQUENCE [LARGE SCALE GENOMIC DNA]</scope>
    <source>
        <strain>KBAB4</strain>
    </source>
</reference>
<evidence type="ECO:0000255" key="1">
    <source>
        <dbReference type="HAMAP-Rule" id="MF_00141"/>
    </source>
</evidence>
<organism>
    <name type="scientific">Bacillus mycoides (strain KBAB4)</name>
    <name type="common">Bacillus weihenstephanensis</name>
    <dbReference type="NCBI Taxonomy" id="315730"/>
    <lineage>
        <taxon>Bacteria</taxon>
        <taxon>Bacillati</taxon>
        <taxon>Bacillota</taxon>
        <taxon>Bacilli</taxon>
        <taxon>Bacillales</taxon>
        <taxon>Bacillaceae</taxon>
        <taxon>Bacillus</taxon>
        <taxon>Bacillus cereus group</taxon>
    </lineage>
</organism>
<protein>
    <recommendedName>
        <fullName evidence="1">Elongation factor P</fullName>
        <shortName evidence="1">EF-P</shortName>
    </recommendedName>
</protein>
<proteinExistence type="inferred from homology"/>
<feature type="chain" id="PRO_1000096121" description="Elongation factor P">
    <location>
        <begin position="1"/>
        <end position="185"/>
    </location>
</feature>
<name>EFP_BACMK</name>
<dbReference type="EMBL" id="CP000903">
    <property type="protein sequence ID" value="ABY45212.1"/>
    <property type="molecule type" value="Genomic_DNA"/>
</dbReference>
<dbReference type="RefSeq" id="WP_002033989.1">
    <property type="nucleotide sequence ID" value="NZ_CAKMRX030000166.1"/>
</dbReference>
<dbReference type="SMR" id="A9VGY0"/>
<dbReference type="KEGG" id="bwe:BcerKBAB4_4050"/>
<dbReference type="eggNOG" id="COG0231">
    <property type="taxonomic scope" value="Bacteria"/>
</dbReference>
<dbReference type="HOGENOM" id="CLU_074944_0_1_9"/>
<dbReference type="UniPathway" id="UPA00345"/>
<dbReference type="Proteomes" id="UP000002154">
    <property type="component" value="Chromosome"/>
</dbReference>
<dbReference type="GO" id="GO:0005737">
    <property type="term" value="C:cytoplasm"/>
    <property type="evidence" value="ECO:0007669"/>
    <property type="project" value="UniProtKB-SubCell"/>
</dbReference>
<dbReference type="GO" id="GO:0003746">
    <property type="term" value="F:translation elongation factor activity"/>
    <property type="evidence" value="ECO:0007669"/>
    <property type="project" value="UniProtKB-UniRule"/>
</dbReference>
<dbReference type="GO" id="GO:0043043">
    <property type="term" value="P:peptide biosynthetic process"/>
    <property type="evidence" value="ECO:0007669"/>
    <property type="project" value="InterPro"/>
</dbReference>
<dbReference type="CDD" id="cd04470">
    <property type="entry name" value="S1_EF-P_repeat_1"/>
    <property type="match status" value="1"/>
</dbReference>
<dbReference type="CDD" id="cd05794">
    <property type="entry name" value="S1_EF-P_repeat_2"/>
    <property type="match status" value="1"/>
</dbReference>
<dbReference type="FunFam" id="2.30.30.30:FF:000010">
    <property type="entry name" value="Elongation factor P"/>
    <property type="match status" value="1"/>
</dbReference>
<dbReference type="FunFam" id="2.40.50.140:FF:000004">
    <property type="entry name" value="Elongation factor P"/>
    <property type="match status" value="1"/>
</dbReference>
<dbReference type="FunFam" id="2.40.50.140:FF:000009">
    <property type="entry name" value="Elongation factor P"/>
    <property type="match status" value="1"/>
</dbReference>
<dbReference type="Gene3D" id="2.30.30.30">
    <property type="match status" value="1"/>
</dbReference>
<dbReference type="Gene3D" id="2.40.50.140">
    <property type="entry name" value="Nucleic acid-binding proteins"/>
    <property type="match status" value="2"/>
</dbReference>
<dbReference type="HAMAP" id="MF_00141">
    <property type="entry name" value="EF_P"/>
    <property type="match status" value="1"/>
</dbReference>
<dbReference type="InterPro" id="IPR015365">
    <property type="entry name" value="Elong-fact-P_C"/>
</dbReference>
<dbReference type="InterPro" id="IPR012340">
    <property type="entry name" value="NA-bd_OB-fold"/>
</dbReference>
<dbReference type="InterPro" id="IPR014722">
    <property type="entry name" value="Rib_uL2_dom2"/>
</dbReference>
<dbReference type="InterPro" id="IPR020599">
    <property type="entry name" value="Transl_elong_fac_P/YeiP"/>
</dbReference>
<dbReference type="InterPro" id="IPR013185">
    <property type="entry name" value="Transl_elong_KOW-like"/>
</dbReference>
<dbReference type="InterPro" id="IPR001059">
    <property type="entry name" value="Transl_elong_P/YeiP_cen"/>
</dbReference>
<dbReference type="InterPro" id="IPR013852">
    <property type="entry name" value="Transl_elong_P/YeiP_CS"/>
</dbReference>
<dbReference type="InterPro" id="IPR011768">
    <property type="entry name" value="Transl_elongation_fac_P"/>
</dbReference>
<dbReference type="InterPro" id="IPR008991">
    <property type="entry name" value="Translation_prot_SH3-like_sf"/>
</dbReference>
<dbReference type="NCBIfam" id="TIGR00038">
    <property type="entry name" value="efp"/>
    <property type="match status" value="1"/>
</dbReference>
<dbReference type="NCBIfam" id="NF001810">
    <property type="entry name" value="PRK00529.1"/>
    <property type="match status" value="1"/>
</dbReference>
<dbReference type="PANTHER" id="PTHR30053">
    <property type="entry name" value="ELONGATION FACTOR P"/>
    <property type="match status" value="1"/>
</dbReference>
<dbReference type="PANTHER" id="PTHR30053:SF12">
    <property type="entry name" value="ELONGATION FACTOR P (EF-P) FAMILY PROTEIN"/>
    <property type="match status" value="1"/>
</dbReference>
<dbReference type="Pfam" id="PF01132">
    <property type="entry name" value="EFP"/>
    <property type="match status" value="1"/>
</dbReference>
<dbReference type="Pfam" id="PF08207">
    <property type="entry name" value="EFP_N"/>
    <property type="match status" value="1"/>
</dbReference>
<dbReference type="Pfam" id="PF09285">
    <property type="entry name" value="Elong-fact-P_C"/>
    <property type="match status" value="1"/>
</dbReference>
<dbReference type="PIRSF" id="PIRSF005901">
    <property type="entry name" value="EF-P"/>
    <property type="match status" value="1"/>
</dbReference>
<dbReference type="SMART" id="SM01185">
    <property type="entry name" value="EFP"/>
    <property type="match status" value="1"/>
</dbReference>
<dbReference type="SMART" id="SM00841">
    <property type="entry name" value="Elong-fact-P_C"/>
    <property type="match status" value="1"/>
</dbReference>
<dbReference type="SUPFAM" id="SSF50249">
    <property type="entry name" value="Nucleic acid-binding proteins"/>
    <property type="match status" value="2"/>
</dbReference>
<dbReference type="SUPFAM" id="SSF50104">
    <property type="entry name" value="Translation proteins SH3-like domain"/>
    <property type="match status" value="1"/>
</dbReference>
<dbReference type="PROSITE" id="PS01275">
    <property type="entry name" value="EFP"/>
    <property type="match status" value="1"/>
</dbReference>
<accession>A9VGY0</accession>
<sequence length="185" mass="20786">MISVNDFRTGLTISVDNALWQVMDFQHVKPGKGAAFVRSKLRNLRTGSVQEKTFRAGEKVEKAHIENRRMQYLYASGESHVFMDNETYEQIELGENQIERELKFLKENMGVSIMTYQDEVLGVELPNTVELTVSETEPGIKGDTASNVTKPAKLETGLVVQVPIFINEGEMLIINTGEGKYVSRA</sequence>
<comment type="function">
    <text evidence="1">Involved in peptide bond synthesis. Stimulates efficient translation and peptide-bond synthesis on native or reconstituted 70S ribosomes in vitro. Probably functions indirectly by altering the affinity of the ribosome for aminoacyl-tRNA, thus increasing their reactivity as acceptors for peptidyl transferase.</text>
</comment>
<comment type="pathway">
    <text evidence="1">Protein biosynthesis; polypeptide chain elongation.</text>
</comment>
<comment type="subcellular location">
    <subcellularLocation>
        <location evidence="1">Cytoplasm</location>
    </subcellularLocation>
</comment>
<comment type="similarity">
    <text evidence="1">Belongs to the elongation factor P family.</text>
</comment>